<comment type="subcellular location">
    <subcellularLocation>
        <location evidence="2">Membrane</location>
        <topology evidence="2">Single-pass membrane protein</topology>
    </subcellularLocation>
</comment>
<comment type="caution">
    <text evidence="3">Product of a dubious gene prediction unlikely to encode a functional protein. Because of that it is not part of the S.cerevisiae S288c complete/reference proteome set.</text>
</comment>
<reference key="1">
    <citation type="journal article" date="1997" name="Nature">
        <title>The nucleotide sequence of Saccharomyces cerevisiae chromosome XIII.</title>
        <authorList>
            <person name="Bowman S."/>
            <person name="Churcher C.M."/>
            <person name="Badcock K."/>
            <person name="Brown D."/>
            <person name="Chillingworth T."/>
            <person name="Connor R."/>
            <person name="Dedman K."/>
            <person name="Devlin K."/>
            <person name="Gentles S."/>
            <person name="Hamlin N."/>
            <person name="Hunt S."/>
            <person name="Jagels K."/>
            <person name="Lye G."/>
            <person name="Moule S."/>
            <person name="Odell C."/>
            <person name="Pearson D."/>
            <person name="Rajandream M.A."/>
            <person name="Rice P."/>
            <person name="Skelton J."/>
            <person name="Walsh S.V."/>
            <person name="Whitehead S."/>
            <person name="Barrell B.G."/>
        </authorList>
    </citation>
    <scope>NUCLEOTIDE SEQUENCE [LARGE SCALE GENOMIC DNA]</scope>
    <source>
        <strain>ATCC 204508 / S288c</strain>
    </source>
</reference>
<reference key="2">
    <citation type="journal article" date="2014" name="G3 (Bethesda)">
        <title>The reference genome sequence of Saccharomyces cerevisiae: Then and now.</title>
        <authorList>
            <person name="Engel S.R."/>
            <person name="Dietrich F.S."/>
            <person name="Fisk D.G."/>
            <person name="Binkley G."/>
            <person name="Balakrishnan R."/>
            <person name="Costanzo M.C."/>
            <person name="Dwight S.S."/>
            <person name="Hitz B.C."/>
            <person name="Karra K."/>
            <person name="Nash R.S."/>
            <person name="Weng S."/>
            <person name="Wong E.D."/>
            <person name="Lloyd P."/>
            <person name="Skrzypek M.S."/>
            <person name="Miyasato S.R."/>
            <person name="Simison M."/>
            <person name="Cherry J.M."/>
        </authorList>
    </citation>
    <scope>GENOME REANNOTATION</scope>
    <source>
        <strain>ATCC 204508 / S288c</strain>
    </source>
</reference>
<reference key="3">
    <citation type="journal article" date="2007" name="Genome Res.">
        <title>Approaching a complete repository of sequence-verified protein-encoding clones for Saccharomyces cerevisiae.</title>
        <authorList>
            <person name="Hu Y."/>
            <person name="Rolfs A."/>
            <person name="Bhullar B."/>
            <person name="Murthy T.V.S."/>
            <person name="Zhu C."/>
            <person name="Berger M.F."/>
            <person name="Camargo A.A."/>
            <person name="Kelley F."/>
            <person name="McCarron S."/>
            <person name="Jepson D."/>
            <person name="Richardson A."/>
            <person name="Raphael J."/>
            <person name="Moreira D."/>
            <person name="Taycher E."/>
            <person name="Zuo D."/>
            <person name="Mohr S."/>
            <person name="Kane M.F."/>
            <person name="Williamson J."/>
            <person name="Simpson A.J.G."/>
            <person name="Bulyk M.L."/>
            <person name="Harlow E."/>
            <person name="Marsischky G."/>
            <person name="Kolodner R.D."/>
            <person name="LaBaer J."/>
        </authorList>
    </citation>
    <scope>NUCLEOTIDE SEQUENCE [GENOMIC DNA]</scope>
    <source>
        <strain>ATCC 204508 / S288c</strain>
    </source>
</reference>
<dbReference type="EMBL" id="Z48502">
    <property type="status" value="NOT_ANNOTATED_CDS"/>
    <property type="molecule type" value="Genomic_DNA"/>
</dbReference>
<dbReference type="EMBL" id="AY693295">
    <property type="protein sequence ID" value="AAT93314.1"/>
    <property type="molecule type" value="Genomic_DNA"/>
</dbReference>
<dbReference type="EnsemblFungi" id="YMR046W-A_mRNA">
    <property type="protein sequence ID" value="YMR046W-A"/>
    <property type="gene ID" value="YMR046W-A"/>
</dbReference>
<dbReference type="AGR" id="SGD:S000007248"/>
<dbReference type="SGD" id="S000007248">
    <property type="gene designation" value="YMR046W-A"/>
</dbReference>
<dbReference type="GeneTree" id="ENSGT00940000177947"/>
<dbReference type="HOGENOM" id="CLU_211159_0_0_1"/>
<dbReference type="ChiTaRS" id="YMR046W-A">
    <property type="organism name" value="yeast"/>
</dbReference>
<dbReference type="GO" id="GO:0016020">
    <property type="term" value="C:membrane"/>
    <property type="evidence" value="ECO:0007669"/>
    <property type="project" value="UniProtKB-SubCell"/>
</dbReference>
<accession>Q6B0Y5</accession>
<gene>
    <name type="ordered locus">YMR046W-A</name>
</gene>
<proteinExistence type="uncertain"/>
<name>YM046_YEAST</name>
<feature type="chain" id="PRO_0000270976" description="Putative uncharacterized membrane protein YMR046W-A">
    <location>
        <begin position="1"/>
        <end position="42"/>
    </location>
</feature>
<feature type="transmembrane region" description="Helical" evidence="1">
    <location>
        <begin position="5"/>
        <end position="27"/>
    </location>
</feature>
<sequence>MESIFLHTNITIIPHSVLYVSLSYYIINPCTSASSNFDDSFS</sequence>
<evidence type="ECO:0000255" key="1"/>
<evidence type="ECO:0000305" key="2"/>
<evidence type="ECO:0000305" key="3">
    <source>
    </source>
</evidence>
<organism>
    <name type="scientific">Saccharomyces cerevisiae (strain ATCC 204508 / S288c)</name>
    <name type="common">Baker's yeast</name>
    <dbReference type="NCBI Taxonomy" id="559292"/>
    <lineage>
        <taxon>Eukaryota</taxon>
        <taxon>Fungi</taxon>
        <taxon>Dikarya</taxon>
        <taxon>Ascomycota</taxon>
        <taxon>Saccharomycotina</taxon>
        <taxon>Saccharomycetes</taxon>
        <taxon>Saccharomycetales</taxon>
        <taxon>Saccharomycetaceae</taxon>
        <taxon>Saccharomyces</taxon>
    </lineage>
</organism>
<keyword id="KW-0472">Membrane</keyword>
<keyword id="KW-0812">Transmembrane</keyword>
<keyword id="KW-1133">Transmembrane helix</keyword>
<protein>
    <recommendedName>
        <fullName>Putative uncharacterized membrane protein YMR046W-A</fullName>
    </recommendedName>
</protein>